<sequence length="738" mass="82229">MDAFKLLTRATKLKGGAAPSSAQSSTRLPSTGKAANPQLFRSSEADKVLEEARHGKKRKRVAGPEAAESDDDGAELNFFGSSKARRSSASMAKEQEKEQQEQQEHRDDTSDADDADEMDEVQCRTVLNAHKIKVTDMRDLEEIQTVRVESEEPKKKKKKRKQQEESTPALTKKEQKKARRVYPQPLVSFKELRTRYKISRRLAENIAEQGFSVPTEVQLGTLPLLLEGFKVSGNSKDAESIEPDLLVVAPTGSGKTLSFLIPVINKIVRHHHEQEEERGIFSVVVAPTKELASQIVNEGRKLVHGTGVKITLMKKGMRVVDREDDDDENSHSEDSEEGSESEQDEPSTTRKKKGKAPVTKSDILVTTPLLLVNALSANRTKPMATLPLVRNIVLDEADVLLDELFRDQTLDIWRACTHPELRASLWSATMGSNIEDLAKSTIKERKQAYDRTNSYPLLRLVVGLKDSAIPNIEHKLVYAATEQGKLLGLRQLLHPAAASASDVRLRPPFLIFTQTIPRAIALHSELRYDIPAEAGGSSRIAVLHSDLSDGQRSEIMKNFRKGEIWILVTTDLLARGVDFRGINGVVNYDIPNSAAVYVHRVGRTGRAGREGGIAVTYYTKEDIPYVKSIANIIDVSEKLRGKDGEKSIQKWLLDALPDLSKKDKKELKKHGVKARQSNLKSVKDDKEHRKTRISTKSGFDRRMENKKKALIAASRNRKSKTQSTDPGSDNESWDGLDG</sequence>
<proteinExistence type="inferred from homology"/>
<gene>
    <name type="primary">rok1</name>
    <name type="ORF">NFIA_009150</name>
</gene>
<comment type="function">
    <text>ATP-dependent RNA helicase involved in 40S ribosomal subunit biogenesis. Required for the processing and cleavage of 35S pre-rRNA at sites A0, A1, and A2, leading to mature 18S rRNA.</text>
</comment>
<comment type="catalytic activity">
    <reaction>
        <text>ATP + H2O = ADP + phosphate + H(+)</text>
        <dbReference type="Rhea" id="RHEA:13065"/>
        <dbReference type="ChEBI" id="CHEBI:15377"/>
        <dbReference type="ChEBI" id="CHEBI:15378"/>
        <dbReference type="ChEBI" id="CHEBI:30616"/>
        <dbReference type="ChEBI" id="CHEBI:43474"/>
        <dbReference type="ChEBI" id="CHEBI:456216"/>
        <dbReference type="EC" id="3.6.4.13"/>
    </reaction>
</comment>
<comment type="subunit">
    <text evidence="1">Interacts with the U3 snoRNA and is associated with the 90S and 40S pre-ribosomes.</text>
</comment>
<comment type="subcellular location">
    <subcellularLocation>
        <location evidence="1">Nucleus</location>
        <location evidence="1">Nucleolus</location>
    </subcellularLocation>
</comment>
<comment type="domain">
    <text>The Q motif is unique to and characteristic of the DEAD box family of RNA helicases and controls ATP binding and hydrolysis.</text>
</comment>
<comment type="similarity">
    <text evidence="5">Belongs to the DEAD box helicase family. DDX52/ROK1 subfamily.</text>
</comment>
<organism>
    <name type="scientific">Neosartorya fischeri (strain ATCC 1020 / DSM 3700 / CBS 544.65 / FGSC A1164 / JCM 1740 / NRRL 181 / WB 181)</name>
    <name type="common">Aspergillus fischerianus</name>
    <dbReference type="NCBI Taxonomy" id="331117"/>
    <lineage>
        <taxon>Eukaryota</taxon>
        <taxon>Fungi</taxon>
        <taxon>Dikarya</taxon>
        <taxon>Ascomycota</taxon>
        <taxon>Pezizomycotina</taxon>
        <taxon>Eurotiomycetes</taxon>
        <taxon>Eurotiomycetidae</taxon>
        <taxon>Eurotiales</taxon>
        <taxon>Aspergillaceae</taxon>
        <taxon>Aspergillus</taxon>
        <taxon>Aspergillus subgen. Fumigati</taxon>
    </lineage>
</organism>
<name>ROK1_NEOFI</name>
<accession>A1D1E3</accession>
<dbReference type="EC" id="3.6.4.13"/>
<dbReference type="EMBL" id="DS027688">
    <property type="protein sequence ID" value="EAW22236.1"/>
    <property type="molecule type" value="Genomic_DNA"/>
</dbReference>
<dbReference type="RefSeq" id="XP_001264133.1">
    <property type="nucleotide sequence ID" value="XM_001264132.1"/>
</dbReference>
<dbReference type="SMR" id="A1D1E3"/>
<dbReference type="STRING" id="331117.A1D1E3"/>
<dbReference type="EnsemblFungi" id="EAW22236">
    <property type="protein sequence ID" value="EAW22236"/>
    <property type="gene ID" value="NFIA_009150"/>
</dbReference>
<dbReference type="GeneID" id="4591949"/>
<dbReference type="KEGG" id="nfi:NFIA_009150"/>
<dbReference type="VEuPathDB" id="FungiDB:NFIA_009150"/>
<dbReference type="eggNOG" id="KOG0344">
    <property type="taxonomic scope" value="Eukaryota"/>
</dbReference>
<dbReference type="HOGENOM" id="CLU_003041_1_4_1"/>
<dbReference type="OMA" id="FRAGEIW"/>
<dbReference type="OrthoDB" id="360161at2759"/>
<dbReference type="Proteomes" id="UP000006702">
    <property type="component" value="Unassembled WGS sequence"/>
</dbReference>
<dbReference type="GO" id="GO:0005829">
    <property type="term" value="C:cytosol"/>
    <property type="evidence" value="ECO:0007669"/>
    <property type="project" value="TreeGrafter"/>
</dbReference>
<dbReference type="GO" id="GO:0005730">
    <property type="term" value="C:nucleolus"/>
    <property type="evidence" value="ECO:0007669"/>
    <property type="project" value="UniProtKB-SubCell"/>
</dbReference>
<dbReference type="GO" id="GO:0005524">
    <property type="term" value="F:ATP binding"/>
    <property type="evidence" value="ECO:0007669"/>
    <property type="project" value="UniProtKB-KW"/>
</dbReference>
<dbReference type="GO" id="GO:0016887">
    <property type="term" value="F:ATP hydrolysis activity"/>
    <property type="evidence" value="ECO:0007669"/>
    <property type="project" value="RHEA"/>
</dbReference>
<dbReference type="GO" id="GO:0003723">
    <property type="term" value="F:RNA binding"/>
    <property type="evidence" value="ECO:0007669"/>
    <property type="project" value="UniProtKB-KW"/>
</dbReference>
<dbReference type="GO" id="GO:0003724">
    <property type="term" value="F:RNA helicase activity"/>
    <property type="evidence" value="ECO:0007669"/>
    <property type="project" value="UniProtKB-EC"/>
</dbReference>
<dbReference type="GO" id="GO:0030490">
    <property type="term" value="P:maturation of SSU-rRNA"/>
    <property type="evidence" value="ECO:0007669"/>
    <property type="project" value="InterPro"/>
</dbReference>
<dbReference type="CDD" id="cd17957">
    <property type="entry name" value="DEADc_DDX52"/>
    <property type="match status" value="1"/>
</dbReference>
<dbReference type="CDD" id="cd18787">
    <property type="entry name" value="SF2_C_DEAD"/>
    <property type="match status" value="1"/>
</dbReference>
<dbReference type="Gene3D" id="3.40.50.300">
    <property type="entry name" value="P-loop containing nucleotide triphosphate hydrolases"/>
    <property type="match status" value="2"/>
</dbReference>
<dbReference type="InterPro" id="IPR044764">
    <property type="entry name" value="DDX52/Rok1_DEADc"/>
</dbReference>
<dbReference type="InterPro" id="IPR011545">
    <property type="entry name" value="DEAD/DEAH_box_helicase_dom"/>
</dbReference>
<dbReference type="InterPro" id="IPR050079">
    <property type="entry name" value="DEAD_box_RNA_helicase"/>
</dbReference>
<dbReference type="InterPro" id="IPR014001">
    <property type="entry name" value="Helicase_ATP-bd"/>
</dbReference>
<dbReference type="InterPro" id="IPR001650">
    <property type="entry name" value="Helicase_C-like"/>
</dbReference>
<dbReference type="InterPro" id="IPR027417">
    <property type="entry name" value="P-loop_NTPase"/>
</dbReference>
<dbReference type="PANTHER" id="PTHR47959">
    <property type="entry name" value="ATP-DEPENDENT RNA HELICASE RHLE-RELATED"/>
    <property type="match status" value="1"/>
</dbReference>
<dbReference type="PANTHER" id="PTHR47959:SF15">
    <property type="entry name" value="RNA HELICASE"/>
    <property type="match status" value="1"/>
</dbReference>
<dbReference type="Pfam" id="PF00270">
    <property type="entry name" value="DEAD"/>
    <property type="match status" value="1"/>
</dbReference>
<dbReference type="Pfam" id="PF00271">
    <property type="entry name" value="Helicase_C"/>
    <property type="match status" value="1"/>
</dbReference>
<dbReference type="SMART" id="SM00487">
    <property type="entry name" value="DEXDc"/>
    <property type="match status" value="1"/>
</dbReference>
<dbReference type="SMART" id="SM00490">
    <property type="entry name" value="HELICc"/>
    <property type="match status" value="1"/>
</dbReference>
<dbReference type="SUPFAM" id="SSF52540">
    <property type="entry name" value="P-loop containing nucleoside triphosphate hydrolases"/>
    <property type="match status" value="1"/>
</dbReference>
<dbReference type="PROSITE" id="PS51192">
    <property type="entry name" value="HELICASE_ATP_BIND_1"/>
    <property type="match status" value="1"/>
</dbReference>
<dbReference type="PROSITE" id="PS51194">
    <property type="entry name" value="HELICASE_CTER"/>
    <property type="match status" value="1"/>
</dbReference>
<dbReference type="PROSITE" id="PS51195">
    <property type="entry name" value="Q_MOTIF"/>
    <property type="match status" value="1"/>
</dbReference>
<evidence type="ECO:0000250" key="1"/>
<evidence type="ECO:0000255" key="2">
    <source>
        <dbReference type="PROSITE-ProRule" id="PRU00541"/>
    </source>
</evidence>
<evidence type="ECO:0000255" key="3">
    <source>
        <dbReference type="PROSITE-ProRule" id="PRU00542"/>
    </source>
</evidence>
<evidence type="ECO:0000256" key="4">
    <source>
        <dbReference type="SAM" id="MobiDB-lite"/>
    </source>
</evidence>
<evidence type="ECO:0000305" key="5"/>
<reference key="1">
    <citation type="journal article" date="2008" name="PLoS Genet.">
        <title>Genomic islands in the pathogenic filamentous fungus Aspergillus fumigatus.</title>
        <authorList>
            <person name="Fedorova N.D."/>
            <person name="Khaldi N."/>
            <person name="Joardar V.S."/>
            <person name="Maiti R."/>
            <person name="Amedeo P."/>
            <person name="Anderson M.J."/>
            <person name="Crabtree J."/>
            <person name="Silva J.C."/>
            <person name="Badger J.H."/>
            <person name="Albarraq A."/>
            <person name="Angiuoli S."/>
            <person name="Bussey H."/>
            <person name="Bowyer P."/>
            <person name="Cotty P.J."/>
            <person name="Dyer P.S."/>
            <person name="Egan A."/>
            <person name="Galens K."/>
            <person name="Fraser-Liggett C.M."/>
            <person name="Haas B.J."/>
            <person name="Inman J.M."/>
            <person name="Kent R."/>
            <person name="Lemieux S."/>
            <person name="Malavazi I."/>
            <person name="Orvis J."/>
            <person name="Roemer T."/>
            <person name="Ronning C.M."/>
            <person name="Sundaram J.P."/>
            <person name="Sutton G."/>
            <person name="Turner G."/>
            <person name="Venter J.C."/>
            <person name="White O.R."/>
            <person name="Whitty B.R."/>
            <person name="Youngman P."/>
            <person name="Wolfe K.H."/>
            <person name="Goldman G.H."/>
            <person name="Wortman J.R."/>
            <person name="Jiang B."/>
            <person name="Denning D.W."/>
            <person name="Nierman W.C."/>
        </authorList>
    </citation>
    <scope>NUCLEOTIDE SEQUENCE [LARGE SCALE GENOMIC DNA]</scope>
    <source>
        <strain>ATCC 1020 / DSM 3700 / CBS 544.65 / FGSC A1164 / JCM 1740 / NRRL 181 / WB 181</strain>
    </source>
</reference>
<protein>
    <recommendedName>
        <fullName>ATP-dependent RNA helicase rok1</fullName>
        <ecNumber>3.6.4.13</ecNumber>
    </recommendedName>
</protein>
<feature type="chain" id="PRO_0000282702" description="ATP-dependent RNA helicase rok1">
    <location>
        <begin position="1"/>
        <end position="738"/>
    </location>
</feature>
<feature type="domain" description="Helicase ATP-binding" evidence="2">
    <location>
        <begin position="236"/>
        <end position="448"/>
    </location>
</feature>
<feature type="domain" description="Helicase C-terminal" evidence="3">
    <location>
        <begin position="488"/>
        <end position="656"/>
    </location>
</feature>
<feature type="region of interest" description="Disordered" evidence="4">
    <location>
        <begin position="13"/>
        <end position="116"/>
    </location>
</feature>
<feature type="region of interest" description="Disordered" evidence="4">
    <location>
        <begin position="148"/>
        <end position="179"/>
    </location>
</feature>
<feature type="region of interest" description="Disordered" evidence="4">
    <location>
        <begin position="319"/>
        <end position="358"/>
    </location>
</feature>
<feature type="region of interest" description="Disordered" evidence="4">
    <location>
        <begin position="664"/>
        <end position="738"/>
    </location>
</feature>
<feature type="short sequence motif" description="Q motif">
    <location>
        <begin position="191"/>
        <end position="219"/>
    </location>
</feature>
<feature type="short sequence motif" description="DEAD box">
    <location>
        <begin position="395"/>
        <end position="398"/>
    </location>
</feature>
<feature type="compositionally biased region" description="Polar residues" evidence="4">
    <location>
        <begin position="20"/>
        <end position="29"/>
    </location>
</feature>
<feature type="compositionally biased region" description="Basic and acidic residues" evidence="4">
    <location>
        <begin position="43"/>
        <end position="53"/>
    </location>
</feature>
<feature type="compositionally biased region" description="Basic and acidic residues" evidence="4">
    <location>
        <begin position="93"/>
        <end position="109"/>
    </location>
</feature>
<feature type="compositionally biased region" description="Acidic residues" evidence="4">
    <location>
        <begin position="322"/>
        <end position="345"/>
    </location>
</feature>
<feature type="compositionally biased region" description="Basic and acidic residues" evidence="4">
    <location>
        <begin position="698"/>
        <end position="707"/>
    </location>
</feature>
<feature type="compositionally biased region" description="Basic residues" evidence="4">
    <location>
        <begin position="708"/>
        <end position="720"/>
    </location>
</feature>
<feature type="compositionally biased region" description="Polar residues" evidence="4">
    <location>
        <begin position="721"/>
        <end position="730"/>
    </location>
</feature>
<feature type="binding site" evidence="2">
    <location>
        <begin position="249"/>
        <end position="256"/>
    </location>
    <ligand>
        <name>ATP</name>
        <dbReference type="ChEBI" id="CHEBI:30616"/>
    </ligand>
</feature>
<keyword id="KW-0067">ATP-binding</keyword>
<keyword id="KW-0347">Helicase</keyword>
<keyword id="KW-0378">Hydrolase</keyword>
<keyword id="KW-0547">Nucleotide-binding</keyword>
<keyword id="KW-0539">Nucleus</keyword>
<keyword id="KW-1185">Reference proteome</keyword>
<keyword id="KW-0690">Ribosome biogenesis</keyword>
<keyword id="KW-0694">RNA-binding</keyword>
<keyword id="KW-0698">rRNA processing</keyword>